<feature type="chain" id="PRO_0000101321" description="Uncharacterized protein RC0188">
    <location>
        <begin position="1"/>
        <end position="704"/>
    </location>
</feature>
<name>Y188_RICCN</name>
<gene>
    <name type="ordered locus">RC0188</name>
</gene>
<dbReference type="EMBL" id="AE006914">
    <property type="protein sequence ID" value="AAL02726.1"/>
    <property type="molecule type" value="Genomic_DNA"/>
</dbReference>
<dbReference type="PIR" id="D97723">
    <property type="entry name" value="D97723"/>
</dbReference>
<dbReference type="RefSeq" id="WP_010976857.1">
    <property type="nucleotide sequence ID" value="NC_003103.1"/>
</dbReference>
<dbReference type="GeneID" id="928003"/>
<dbReference type="KEGG" id="rco:RC0188"/>
<dbReference type="PATRIC" id="fig|272944.4.peg.217"/>
<dbReference type="HOGENOM" id="CLU_024187_0_0_5"/>
<dbReference type="Proteomes" id="UP000000816">
    <property type="component" value="Chromosome"/>
</dbReference>
<organism>
    <name type="scientific">Rickettsia conorii (strain ATCC VR-613 / Malish 7)</name>
    <dbReference type="NCBI Taxonomy" id="272944"/>
    <lineage>
        <taxon>Bacteria</taxon>
        <taxon>Pseudomonadati</taxon>
        <taxon>Pseudomonadota</taxon>
        <taxon>Alphaproteobacteria</taxon>
        <taxon>Rickettsiales</taxon>
        <taxon>Rickettsiaceae</taxon>
        <taxon>Rickettsieae</taxon>
        <taxon>Rickettsia</taxon>
        <taxon>spotted fever group</taxon>
    </lineage>
</organism>
<proteinExistence type="predicted"/>
<reference key="1">
    <citation type="journal article" date="2001" name="Science">
        <title>Mechanisms of evolution in Rickettsia conorii and R. prowazekii.</title>
        <authorList>
            <person name="Ogata H."/>
            <person name="Audic S."/>
            <person name="Renesto-Audiffren P."/>
            <person name="Fournier P.-E."/>
            <person name="Barbe V."/>
            <person name="Samson D."/>
            <person name="Roux V."/>
            <person name="Cossart P."/>
            <person name="Weissenbach J."/>
            <person name="Claverie J.-M."/>
            <person name="Raoult D."/>
        </authorList>
    </citation>
    <scope>NUCLEOTIDE SEQUENCE [LARGE SCALE GENOMIC DNA]</scope>
    <source>
        <strain>ATCC VR-613 / Malish 7</strain>
    </source>
</reference>
<accession>Q92J81</accession>
<sequence>MSKEKTQQELLLQEQLFKALKTNDTELNAKISRTCKGIAESVIDLSNDQSPTAESLYISYMALADLNTKDLAKVTTIIKNSFPGDKNKKLREIIDAPLLEHLVMIEAIERQVGLDDSRYNADYRKLEEIRNPNDPKKVIDAMLRDKRVAQQAEFEEKGKKAAGVSAGYVAKDNAGNTFILKHFYKTHAACQKIQGNHAQRQAMADRRDGVQELIGSTMYQFLLHDRAPKEGLVTADEQHPDSLYVRSKFFDNAVTLTEFSGLSGETRVRDNDQNLKKLEGFEKAIAACHMLGEVDYHAGNLMVQDGKTITKIDHGRSFLAFHKNFSSMIQSTAEMFTHPGVGYSAAIKAGNFSFSIDKYSESLNQMISQFDEKHMEAIVDQKIDELKKAGFDPKNIMLSTNIQNFDDLRKHYKSSIKENLVNMQEVAKGAEIVTKFSNVSPEFKNGGWLEAFANSPVKDPVLYAIDNNITIEGKDAKEWAYENNYQIKISIGLKKETIKEQQWSKDLDGKWKEKEVEVKTDKVEVQISDPAKSMRIQDKSTGEKLASLIVDFTKQATTKNVTDKAVAKFYDNIMKVLKKENYLTEQDIKGIKKNLKYQDNIENTTNLLNAKSFKLNSKDTIYYKVGIFCEKRGLPSISNYFMKQISPENLNKIHNTEKLIAETIKIGNILQQKKQERLQTKRVETVKEIAFSQLQARKERHQQR</sequence>
<protein>
    <recommendedName>
        <fullName>Uncharacterized protein RC0188</fullName>
    </recommendedName>
</protein>